<sequence>MVSFTVSVPATTANIGPGFDCLGAALGLYNHVTVTDPTDPEVDLLIEARGRDGEKISTTKDNLLYQAIAYFYQQTGQAIPPLKLEIDLEIPLARGLGSSATAIVGGLLAANQAAGNPCTTSEILQMAIAMEGHPDNVAPALLGGCQLAVKNGDHWQLVALDWPSKFVPVLAIPNFELSTEAARAVLPHQYDRSAAIFNASHLALLVQAFSQGRGDWLALALQDQIHQPYRQSLIPAYDQLHQAALAAGAYNLVISGAGPTLLAIADEVRAPQIASTLVETWHDAGIEAESHCLPIDTKGATITKLR</sequence>
<accession>P73646</accession>
<feature type="chain" id="PRO_0000156624" description="Homoserine kinase">
    <location>
        <begin position="1"/>
        <end position="306"/>
    </location>
</feature>
<feature type="binding site" evidence="1">
    <location>
        <begin position="91"/>
        <end position="101"/>
    </location>
    <ligand>
        <name>ATP</name>
        <dbReference type="ChEBI" id="CHEBI:30616"/>
    </ligand>
</feature>
<gene>
    <name evidence="1" type="primary">thrB</name>
    <name type="ordered locus">sll1760</name>
</gene>
<comment type="function">
    <text evidence="1">Catalyzes the ATP-dependent phosphorylation of L-homoserine to L-homoserine phosphate.</text>
</comment>
<comment type="catalytic activity">
    <reaction evidence="1">
        <text>L-homoserine + ATP = O-phospho-L-homoserine + ADP + H(+)</text>
        <dbReference type="Rhea" id="RHEA:13985"/>
        <dbReference type="ChEBI" id="CHEBI:15378"/>
        <dbReference type="ChEBI" id="CHEBI:30616"/>
        <dbReference type="ChEBI" id="CHEBI:57476"/>
        <dbReference type="ChEBI" id="CHEBI:57590"/>
        <dbReference type="ChEBI" id="CHEBI:456216"/>
        <dbReference type="EC" id="2.7.1.39"/>
    </reaction>
</comment>
<comment type="pathway">
    <text evidence="1">Amino-acid biosynthesis; L-threonine biosynthesis; L-threonine from L-aspartate: step 4/5.</text>
</comment>
<comment type="subcellular location">
    <subcellularLocation>
        <location evidence="1">Cytoplasm</location>
    </subcellularLocation>
</comment>
<comment type="similarity">
    <text evidence="1">Belongs to the GHMP kinase family. Homoserine kinase subfamily.</text>
</comment>
<organism>
    <name type="scientific">Synechocystis sp. (strain ATCC 27184 / PCC 6803 / Kazusa)</name>
    <dbReference type="NCBI Taxonomy" id="1111708"/>
    <lineage>
        <taxon>Bacteria</taxon>
        <taxon>Bacillati</taxon>
        <taxon>Cyanobacteriota</taxon>
        <taxon>Cyanophyceae</taxon>
        <taxon>Synechococcales</taxon>
        <taxon>Merismopediaceae</taxon>
        <taxon>Synechocystis</taxon>
    </lineage>
</organism>
<dbReference type="EC" id="2.7.1.39" evidence="1"/>
<dbReference type="EMBL" id="BA000022">
    <property type="protein sequence ID" value="BAA17691.1"/>
    <property type="molecule type" value="Genomic_DNA"/>
</dbReference>
<dbReference type="PIR" id="S77133">
    <property type="entry name" value="S77133"/>
</dbReference>
<dbReference type="SMR" id="P73646"/>
<dbReference type="FunCoup" id="P73646">
    <property type="interactions" value="323"/>
</dbReference>
<dbReference type="IntAct" id="P73646">
    <property type="interactions" value="1"/>
</dbReference>
<dbReference type="STRING" id="1148.gene:10498558"/>
<dbReference type="PaxDb" id="1148-1652772"/>
<dbReference type="EnsemblBacteria" id="BAA17691">
    <property type="protein sequence ID" value="BAA17691"/>
    <property type="gene ID" value="BAA17691"/>
</dbReference>
<dbReference type="KEGG" id="syn:sll1760"/>
<dbReference type="eggNOG" id="COG0083">
    <property type="taxonomic scope" value="Bacteria"/>
</dbReference>
<dbReference type="InParanoid" id="P73646"/>
<dbReference type="PhylomeDB" id="P73646"/>
<dbReference type="UniPathway" id="UPA00050">
    <property type="reaction ID" value="UER00064"/>
</dbReference>
<dbReference type="Proteomes" id="UP000001425">
    <property type="component" value="Chromosome"/>
</dbReference>
<dbReference type="GO" id="GO:0005737">
    <property type="term" value="C:cytoplasm"/>
    <property type="evidence" value="ECO:0007669"/>
    <property type="project" value="UniProtKB-SubCell"/>
</dbReference>
<dbReference type="GO" id="GO:0005524">
    <property type="term" value="F:ATP binding"/>
    <property type="evidence" value="ECO:0007669"/>
    <property type="project" value="UniProtKB-UniRule"/>
</dbReference>
<dbReference type="GO" id="GO:0004413">
    <property type="term" value="F:homoserine kinase activity"/>
    <property type="evidence" value="ECO:0007669"/>
    <property type="project" value="UniProtKB-UniRule"/>
</dbReference>
<dbReference type="GO" id="GO:0009088">
    <property type="term" value="P:threonine biosynthetic process"/>
    <property type="evidence" value="ECO:0007669"/>
    <property type="project" value="UniProtKB-UniRule"/>
</dbReference>
<dbReference type="Gene3D" id="3.30.230.10">
    <property type="match status" value="1"/>
</dbReference>
<dbReference type="Gene3D" id="3.30.70.890">
    <property type="entry name" value="GHMP kinase, C-terminal domain"/>
    <property type="match status" value="1"/>
</dbReference>
<dbReference type="HAMAP" id="MF_00384">
    <property type="entry name" value="Homoser_kinase"/>
    <property type="match status" value="1"/>
</dbReference>
<dbReference type="InterPro" id="IPR013750">
    <property type="entry name" value="GHMP_kinase_C_dom"/>
</dbReference>
<dbReference type="InterPro" id="IPR036554">
    <property type="entry name" value="GHMP_kinase_C_sf"/>
</dbReference>
<dbReference type="InterPro" id="IPR006204">
    <property type="entry name" value="GHMP_kinase_N_dom"/>
</dbReference>
<dbReference type="InterPro" id="IPR006203">
    <property type="entry name" value="GHMP_knse_ATP-bd_CS"/>
</dbReference>
<dbReference type="InterPro" id="IPR000870">
    <property type="entry name" value="Homoserine_kinase"/>
</dbReference>
<dbReference type="InterPro" id="IPR020568">
    <property type="entry name" value="Ribosomal_Su5_D2-typ_SF"/>
</dbReference>
<dbReference type="InterPro" id="IPR014721">
    <property type="entry name" value="Ribsml_uS5_D2-typ_fold_subgr"/>
</dbReference>
<dbReference type="NCBIfam" id="NF002288">
    <property type="entry name" value="PRK01212.1-4"/>
    <property type="match status" value="1"/>
</dbReference>
<dbReference type="NCBIfam" id="TIGR00191">
    <property type="entry name" value="thrB"/>
    <property type="match status" value="1"/>
</dbReference>
<dbReference type="PANTHER" id="PTHR20861:SF1">
    <property type="entry name" value="HOMOSERINE KINASE"/>
    <property type="match status" value="1"/>
</dbReference>
<dbReference type="PANTHER" id="PTHR20861">
    <property type="entry name" value="HOMOSERINE/4-DIPHOSPHOCYTIDYL-2-C-METHYL-D-ERYTHRITOL KINASE"/>
    <property type="match status" value="1"/>
</dbReference>
<dbReference type="Pfam" id="PF08544">
    <property type="entry name" value="GHMP_kinases_C"/>
    <property type="match status" value="1"/>
</dbReference>
<dbReference type="Pfam" id="PF00288">
    <property type="entry name" value="GHMP_kinases_N"/>
    <property type="match status" value="1"/>
</dbReference>
<dbReference type="PIRSF" id="PIRSF000676">
    <property type="entry name" value="Homoser_kin"/>
    <property type="match status" value="1"/>
</dbReference>
<dbReference type="PRINTS" id="PR00958">
    <property type="entry name" value="HOMSERKINASE"/>
</dbReference>
<dbReference type="SUPFAM" id="SSF55060">
    <property type="entry name" value="GHMP Kinase, C-terminal domain"/>
    <property type="match status" value="1"/>
</dbReference>
<dbReference type="SUPFAM" id="SSF54211">
    <property type="entry name" value="Ribosomal protein S5 domain 2-like"/>
    <property type="match status" value="1"/>
</dbReference>
<dbReference type="PROSITE" id="PS00627">
    <property type="entry name" value="GHMP_KINASES_ATP"/>
    <property type="match status" value="1"/>
</dbReference>
<keyword id="KW-0028">Amino-acid biosynthesis</keyword>
<keyword id="KW-0067">ATP-binding</keyword>
<keyword id="KW-0963">Cytoplasm</keyword>
<keyword id="KW-0418">Kinase</keyword>
<keyword id="KW-0547">Nucleotide-binding</keyword>
<keyword id="KW-1185">Reference proteome</keyword>
<keyword id="KW-0791">Threonine biosynthesis</keyword>
<keyword id="KW-0808">Transferase</keyword>
<protein>
    <recommendedName>
        <fullName evidence="1">Homoserine kinase</fullName>
        <shortName evidence="1">HK</shortName>
        <shortName evidence="1">HSK</shortName>
        <ecNumber evidence="1">2.7.1.39</ecNumber>
    </recommendedName>
</protein>
<evidence type="ECO:0000255" key="1">
    <source>
        <dbReference type="HAMAP-Rule" id="MF_00384"/>
    </source>
</evidence>
<proteinExistence type="inferred from homology"/>
<name>KHSE_SYNY3</name>
<reference key="1">
    <citation type="journal article" date="1996" name="DNA Res.">
        <title>Sequence analysis of the genome of the unicellular cyanobacterium Synechocystis sp. strain PCC6803. II. Sequence determination of the entire genome and assignment of potential protein-coding regions.</title>
        <authorList>
            <person name="Kaneko T."/>
            <person name="Sato S."/>
            <person name="Kotani H."/>
            <person name="Tanaka A."/>
            <person name="Asamizu E."/>
            <person name="Nakamura Y."/>
            <person name="Miyajima N."/>
            <person name="Hirosawa M."/>
            <person name="Sugiura M."/>
            <person name="Sasamoto S."/>
            <person name="Kimura T."/>
            <person name="Hosouchi T."/>
            <person name="Matsuno A."/>
            <person name="Muraki A."/>
            <person name="Nakazaki N."/>
            <person name="Naruo K."/>
            <person name="Okumura S."/>
            <person name="Shimpo S."/>
            <person name="Takeuchi C."/>
            <person name="Wada T."/>
            <person name="Watanabe A."/>
            <person name="Yamada M."/>
            <person name="Yasuda M."/>
            <person name="Tabata S."/>
        </authorList>
    </citation>
    <scope>NUCLEOTIDE SEQUENCE [LARGE SCALE GENOMIC DNA]</scope>
    <source>
        <strain>ATCC 27184 / PCC 6803 / Kazusa</strain>
    </source>
</reference>